<protein>
    <recommendedName>
        <fullName evidence="1">Recombination protein RecR</fullName>
    </recommendedName>
</protein>
<gene>
    <name evidence="1" type="primary">recR</name>
    <name type="ordered locus">Mmcs_4903</name>
</gene>
<dbReference type="EMBL" id="CP000384">
    <property type="protein sequence ID" value="ABG11007.1"/>
    <property type="molecule type" value="Genomic_DNA"/>
</dbReference>
<dbReference type="SMR" id="Q1B277"/>
<dbReference type="KEGG" id="mmc:Mmcs_4903"/>
<dbReference type="HOGENOM" id="CLU_060739_1_0_11"/>
<dbReference type="BioCyc" id="MSP164756:G1G6O-5011-MONOMER"/>
<dbReference type="GO" id="GO:0003677">
    <property type="term" value="F:DNA binding"/>
    <property type="evidence" value="ECO:0007669"/>
    <property type="project" value="UniProtKB-UniRule"/>
</dbReference>
<dbReference type="GO" id="GO:0008270">
    <property type="term" value="F:zinc ion binding"/>
    <property type="evidence" value="ECO:0007669"/>
    <property type="project" value="UniProtKB-KW"/>
</dbReference>
<dbReference type="GO" id="GO:0006310">
    <property type="term" value="P:DNA recombination"/>
    <property type="evidence" value="ECO:0007669"/>
    <property type="project" value="UniProtKB-UniRule"/>
</dbReference>
<dbReference type="GO" id="GO:0006281">
    <property type="term" value="P:DNA repair"/>
    <property type="evidence" value="ECO:0007669"/>
    <property type="project" value="UniProtKB-UniRule"/>
</dbReference>
<dbReference type="CDD" id="cd01025">
    <property type="entry name" value="TOPRIM_recR"/>
    <property type="match status" value="1"/>
</dbReference>
<dbReference type="Gene3D" id="3.30.60.80">
    <property type="match status" value="1"/>
</dbReference>
<dbReference type="Gene3D" id="3.40.1360.10">
    <property type="match status" value="1"/>
</dbReference>
<dbReference type="Gene3D" id="6.10.250.240">
    <property type="match status" value="1"/>
</dbReference>
<dbReference type="Gene3D" id="1.10.8.420">
    <property type="entry name" value="RecR Domain 1"/>
    <property type="match status" value="1"/>
</dbReference>
<dbReference type="HAMAP" id="MF_00017">
    <property type="entry name" value="RecR"/>
    <property type="match status" value="1"/>
</dbReference>
<dbReference type="InterPro" id="IPR000093">
    <property type="entry name" value="DNA_Rcmb_RecR"/>
</dbReference>
<dbReference type="InterPro" id="IPR003583">
    <property type="entry name" value="Hlx-hairpin-Hlx_DNA-bd_motif"/>
</dbReference>
<dbReference type="InterPro" id="IPR023627">
    <property type="entry name" value="Rcmb_RecR"/>
</dbReference>
<dbReference type="InterPro" id="IPR015967">
    <property type="entry name" value="Rcmb_RecR_Znf"/>
</dbReference>
<dbReference type="InterPro" id="IPR006171">
    <property type="entry name" value="TOPRIM_dom"/>
</dbReference>
<dbReference type="InterPro" id="IPR034137">
    <property type="entry name" value="TOPRIM_RecR"/>
</dbReference>
<dbReference type="NCBIfam" id="TIGR00615">
    <property type="entry name" value="recR"/>
    <property type="match status" value="1"/>
</dbReference>
<dbReference type="PANTHER" id="PTHR30446">
    <property type="entry name" value="RECOMBINATION PROTEIN RECR"/>
    <property type="match status" value="1"/>
</dbReference>
<dbReference type="PANTHER" id="PTHR30446:SF0">
    <property type="entry name" value="RECOMBINATION PROTEIN RECR"/>
    <property type="match status" value="1"/>
</dbReference>
<dbReference type="Pfam" id="PF21175">
    <property type="entry name" value="RecR_C"/>
    <property type="match status" value="1"/>
</dbReference>
<dbReference type="Pfam" id="PF21176">
    <property type="entry name" value="RecR_HhH"/>
    <property type="match status" value="1"/>
</dbReference>
<dbReference type="Pfam" id="PF02132">
    <property type="entry name" value="RecR_ZnF"/>
    <property type="match status" value="1"/>
</dbReference>
<dbReference type="Pfam" id="PF13662">
    <property type="entry name" value="Toprim_4"/>
    <property type="match status" value="1"/>
</dbReference>
<dbReference type="SMART" id="SM00278">
    <property type="entry name" value="HhH1"/>
    <property type="match status" value="1"/>
</dbReference>
<dbReference type="SMART" id="SM00493">
    <property type="entry name" value="TOPRIM"/>
    <property type="match status" value="1"/>
</dbReference>
<dbReference type="SUPFAM" id="SSF111304">
    <property type="entry name" value="Recombination protein RecR"/>
    <property type="match status" value="1"/>
</dbReference>
<dbReference type="PROSITE" id="PS01300">
    <property type="entry name" value="RECR"/>
    <property type="match status" value="1"/>
</dbReference>
<dbReference type="PROSITE" id="PS50880">
    <property type="entry name" value="TOPRIM"/>
    <property type="match status" value="1"/>
</dbReference>
<proteinExistence type="inferred from homology"/>
<name>RECR_MYCSS</name>
<feature type="chain" id="PRO_0000322915" description="Recombination protein RecR">
    <location>
        <begin position="1"/>
        <end position="203"/>
    </location>
</feature>
<feature type="domain" description="Toprim" evidence="1">
    <location>
        <begin position="79"/>
        <end position="179"/>
    </location>
</feature>
<feature type="zinc finger region" description="C4-type" evidence="1">
    <location>
        <begin position="56"/>
        <end position="71"/>
    </location>
</feature>
<evidence type="ECO:0000255" key="1">
    <source>
        <dbReference type="HAMAP-Rule" id="MF_00017"/>
    </source>
</evidence>
<comment type="function">
    <text evidence="1">May play a role in DNA repair. It seems to be involved in an RecBC-independent recombinational process of DNA repair. It may act with RecF and RecO.</text>
</comment>
<comment type="similarity">
    <text evidence="1">Belongs to the RecR family.</text>
</comment>
<keyword id="KW-0227">DNA damage</keyword>
<keyword id="KW-0233">DNA recombination</keyword>
<keyword id="KW-0234">DNA repair</keyword>
<keyword id="KW-0479">Metal-binding</keyword>
<keyword id="KW-0862">Zinc</keyword>
<keyword id="KW-0863">Zinc-finger</keyword>
<reference key="1">
    <citation type="submission" date="2006-06" db="EMBL/GenBank/DDBJ databases">
        <title>Complete sequence of chromosome of Mycobacterium sp. MCS.</title>
        <authorList>
            <consortium name="US DOE Joint Genome Institute"/>
            <person name="Copeland A."/>
            <person name="Lucas S."/>
            <person name="Lapidus A."/>
            <person name="Barry K."/>
            <person name="Detter J.C."/>
            <person name="Glavina del Rio T."/>
            <person name="Hammon N."/>
            <person name="Israni S."/>
            <person name="Dalin E."/>
            <person name="Tice H."/>
            <person name="Pitluck S."/>
            <person name="Martinez M."/>
            <person name="Schmutz J."/>
            <person name="Larimer F."/>
            <person name="Land M."/>
            <person name="Hauser L."/>
            <person name="Kyrpides N."/>
            <person name="Kim E."/>
            <person name="Miller C.D."/>
            <person name="Hughes J.E."/>
            <person name="Anderson A.J."/>
            <person name="Sims R.C."/>
            <person name="Richardson P."/>
        </authorList>
    </citation>
    <scope>NUCLEOTIDE SEQUENCE [LARGE SCALE GENOMIC DNA]</scope>
    <source>
        <strain>MCS</strain>
    </source>
</reference>
<organism>
    <name type="scientific">Mycobacterium sp. (strain MCS)</name>
    <dbReference type="NCBI Taxonomy" id="164756"/>
    <lineage>
        <taxon>Bacteria</taxon>
        <taxon>Bacillati</taxon>
        <taxon>Actinomycetota</taxon>
        <taxon>Actinomycetes</taxon>
        <taxon>Mycobacteriales</taxon>
        <taxon>Mycobacteriaceae</taxon>
        <taxon>Mycobacterium</taxon>
    </lineage>
</organism>
<accession>Q1B277</accession>
<sequence length="203" mass="22086">MFEGPVQDLIDELGKLPGIGPKSAQRIAFHLLSVEPPDIDRLTAVLNRIRDGVKFCEVCGNVSDADRCRICSDPRRDASLVCVVEEPKDVQAVERTREFRGRYHVLGGALDPLSGVGPDQLRIRELLNRIGERVDGVDVAEVIIATDPNTEGEATATYLVRMLRDIPGLTVTRIASGLPMGGDLEFADELTLGRALAGRRAMA</sequence>